<dbReference type="EC" id="2.7.2.3" evidence="1"/>
<dbReference type="EMBL" id="CP000159">
    <property type="protein sequence ID" value="ABC45859.1"/>
    <property type="molecule type" value="Genomic_DNA"/>
</dbReference>
<dbReference type="RefSeq" id="WP_011403952.1">
    <property type="nucleotide sequence ID" value="NC_007677.1"/>
</dbReference>
<dbReference type="RefSeq" id="YP_445324.1">
    <property type="nucleotide sequence ID" value="NC_007677.1"/>
</dbReference>
<dbReference type="SMR" id="Q2S3A7"/>
<dbReference type="STRING" id="309807.SRU_1199"/>
<dbReference type="EnsemblBacteria" id="ABC45859">
    <property type="protein sequence ID" value="ABC45859"/>
    <property type="gene ID" value="SRU_1199"/>
</dbReference>
<dbReference type="KEGG" id="sru:SRU_1199"/>
<dbReference type="PATRIC" id="fig|309807.25.peg.1245"/>
<dbReference type="eggNOG" id="COG0126">
    <property type="taxonomic scope" value="Bacteria"/>
</dbReference>
<dbReference type="HOGENOM" id="CLU_025427_0_2_10"/>
<dbReference type="OrthoDB" id="9808460at2"/>
<dbReference type="UniPathway" id="UPA00109">
    <property type="reaction ID" value="UER00185"/>
</dbReference>
<dbReference type="Proteomes" id="UP000008674">
    <property type="component" value="Chromosome"/>
</dbReference>
<dbReference type="GO" id="GO:0005829">
    <property type="term" value="C:cytosol"/>
    <property type="evidence" value="ECO:0007669"/>
    <property type="project" value="TreeGrafter"/>
</dbReference>
<dbReference type="GO" id="GO:0043531">
    <property type="term" value="F:ADP binding"/>
    <property type="evidence" value="ECO:0007669"/>
    <property type="project" value="TreeGrafter"/>
</dbReference>
<dbReference type="GO" id="GO:0005524">
    <property type="term" value="F:ATP binding"/>
    <property type="evidence" value="ECO:0007669"/>
    <property type="project" value="UniProtKB-KW"/>
</dbReference>
<dbReference type="GO" id="GO:0004618">
    <property type="term" value="F:phosphoglycerate kinase activity"/>
    <property type="evidence" value="ECO:0007669"/>
    <property type="project" value="UniProtKB-UniRule"/>
</dbReference>
<dbReference type="GO" id="GO:0006094">
    <property type="term" value="P:gluconeogenesis"/>
    <property type="evidence" value="ECO:0007669"/>
    <property type="project" value="TreeGrafter"/>
</dbReference>
<dbReference type="GO" id="GO:0006096">
    <property type="term" value="P:glycolytic process"/>
    <property type="evidence" value="ECO:0007669"/>
    <property type="project" value="UniProtKB-UniRule"/>
</dbReference>
<dbReference type="FunFam" id="3.40.50.1260:FF:000006">
    <property type="entry name" value="Phosphoglycerate kinase"/>
    <property type="match status" value="1"/>
</dbReference>
<dbReference type="FunFam" id="3.40.50.1260:FF:000031">
    <property type="entry name" value="Phosphoglycerate kinase 1"/>
    <property type="match status" value="1"/>
</dbReference>
<dbReference type="Gene3D" id="3.40.50.1260">
    <property type="entry name" value="Phosphoglycerate kinase, N-terminal domain"/>
    <property type="match status" value="2"/>
</dbReference>
<dbReference type="HAMAP" id="MF_00145">
    <property type="entry name" value="Phosphoglyc_kinase"/>
    <property type="match status" value="1"/>
</dbReference>
<dbReference type="InterPro" id="IPR001576">
    <property type="entry name" value="Phosphoglycerate_kinase"/>
</dbReference>
<dbReference type="InterPro" id="IPR015911">
    <property type="entry name" value="Phosphoglycerate_kinase_CS"/>
</dbReference>
<dbReference type="InterPro" id="IPR015824">
    <property type="entry name" value="Phosphoglycerate_kinase_N"/>
</dbReference>
<dbReference type="InterPro" id="IPR036043">
    <property type="entry name" value="Phosphoglycerate_kinase_sf"/>
</dbReference>
<dbReference type="PANTHER" id="PTHR11406">
    <property type="entry name" value="PHOSPHOGLYCERATE KINASE"/>
    <property type="match status" value="1"/>
</dbReference>
<dbReference type="PANTHER" id="PTHR11406:SF23">
    <property type="entry name" value="PHOSPHOGLYCERATE KINASE 1, CHLOROPLASTIC-RELATED"/>
    <property type="match status" value="1"/>
</dbReference>
<dbReference type="Pfam" id="PF00162">
    <property type="entry name" value="PGK"/>
    <property type="match status" value="1"/>
</dbReference>
<dbReference type="PIRSF" id="PIRSF000724">
    <property type="entry name" value="Pgk"/>
    <property type="match status" value="1"/>
</dbReference>
<dbReference type="PRINTS" id="PR00477">
    <property type="entry name" value="PHGLYCKINASE"/>
</dbReference>
<dbReference type="SUPFAM" id="SSF53748">
    <property type="entry name" value="Phosphoglycerate kinase"/>
    <property type="match status" value="1"/>
</dbReference>
<dbReference type="PROSITE" id="PS00111">
    <property type="entry name" value="PGLYCERATE_KINASE"/>
    <property type="match status" value="1"/>
</dbReference>
<feature type="chain" id="PRO_1000009646" description="Phosphoglycerate kinase">
    <location>
        <begin position="1"/>
        <end position="398"/>
    </location>
</feature>
<feature type="binding site" evidence="1">
    <location>
        <begin position="21"/>
        <end position="23"/>
    </location>
    <ligand>
        <name>substrate</name>
    </ligand>
</feature>
<feature type="binding site" evidence="1">
    <location>
        <position position="41"/>
    </location>
    <ligand>
        <name>substrate</name>
    </ligand>
</feature>
<feature type="binding site" evidence="1">
    <location>
        <begin position="64"/>
        <end position="67"/>
    </location>
    <ligand>
        <name>substrate</name>
    </ligand>
</feature>
<feature type="binding site" evidence="1">
    <location>
        <position position="123"/>
    </location>
    <ligand>
        <name>substrate</name>
    </ligand>
</feature>
<feature type="binding site" evidence="1">
    <location>
        <position position="156"/>
    </location>
    <ligand>
        <name>substrate</name>
    </ligand>
</feature>
<feature type="binding site" evidence="1">
    <location>
        <position position="207"/>
    </location>
    <ligand>
        <name>ATP</name>
        <dbReference type="ChEBI" id="CHEBI:30616"/>
    </ligand>
</feature>
<feature type="binding site" evidence="1">
    <location>
        <position position="294"/>
    </location>
    <ligand>
        <name>ATP</name>
        <dbReference type="ChEBI" id="CHEBI:30616"/>
    </ligand>
</feature>
<feature type="binding site" evidence="1">
    <location>
        <position position="325"/>
    </location>
    <ligand>
        <name>ATP</name>
        <dbReference type="ChEBI" id="CHEBI:30616"/>
    </ligand>
</feature>
<feature type="binding site" evidence="1">
    <location>
        <begin position="354"/>
        <end position="357"/>
    </location>
    <ligand>
        <name>ATP</name>
        <dbReference type="ChEBI" id="CHEBI:30616"/>
    </ligand>
</feature>
<evidence type="ECO:0000255" key="1">
    <source>
        <dbReference type="HAMAP-Rule" id="MF_00145"/>
    </source>
</evidence>
<proteinExistence type="inferred from homology"/>
<keyword id="KW-0067">ATP-binding</keyword>
<keyword id="KW-0963">Cytoplasm</keyword>
<keyword id="KW-0324">Glycolysis</keyword>
<keyword id="KW-0418">Kinase</keyword>
<keyword id="KW-0547">Nucleotide-binding</keyword>
<keyword id="KW-1185">Reference proteome</keyword>
<keyword id="KW-0808">Transferase</keyword>
<comment type="catalytic activity">
    <reaction evidence="1">
        <text>(2R)-3-phosphoglycerate + ATP = (2R)-3-phospho-glyceroyl phosphate + ADP</text>
        <dbReference type="Rhea" id="RHEA:14801"/>
        <dbReference type="ChEBI" id="CHEBI:30616"/>
        <dbReference type="ChEBI" id="CHEBI:57604"/>
        <dbReference type="ChEBI" id="CHEBI:58272"/>
        <dbReference type="ChEBI" id="CHEBI:456216"/>
        <dbReference type="EC" id="2.7.2.3"/>
    </reaction>
</comment>
<comment type="pathway">
    <text evidence="1">Carbohydrate degradation; glycolysis; pyruvate from D-glyceraldehyde 3-phosphate: step 2/5.</text>
</comment>
<comment type="subunit">
    <text evidence="1">Monomer.</text>
</comment>
<comment type="subcellular location">
    <subcellularLocation>
        <location evidence="1">Cytoplasm</location>
    </subcellularLocation>
</comment>
<comment type="similarity">
    <text evidence="1">Belongs to the phosphoglycerate kinase family.</text>
</comment>
<reference key="1">
    <citation type="journal article" date="2005" name="Proc. Natl. Acad. Sci. U.S.A.">
        <title>The genome of Salinibacter ruber: convergence and gene exchange among hyperhalophilic bacteria and archaea.</title>
        <authorList>
            <person name="Mongodin E.F."/>
            <person name="Nelson K.E."/>
            <person name="Daugherty S."/>
            <person name="DeBoy R.T."/>
            <person name="Wister J."/>
            <person name="Khouri H."/>
            <person name="Weidman J."/>
            <person name="Walsh D.A."/>
            <person name="Papke R.T."/>
            <person name="Sanchez Perez G."/>
            <person name="Sharma A.K."/>
            <person name="Nesbo C.L."/>
            <person name="MacLeod D."/>
            <person name="Bapteste E."/>
            <person name="Doolittle W.F."/>
            <person name="Charlebois R.L."/>
            <person name="Legault B."/>
            <person name="Rodriguez-Valera F."/>
        </authorList>
    </citation>
    <scope>NUCLEOTIDE SEQUENCE [LARGE SCALE GENOMIC DNA]</scope>
    <source>
        <strain>DSM 13855 / CECT 5946 / M31</strain>
    </source>
</reference>
<protein>
    <recommendedName>
        <fullName evidence="1">Phosphoglycerate kinase</fullName>
        <ecNumber evidence="1">2.7.2.3</ecNumber>
    </recommendedName>
</protein>
<organism>
    <name type="scientific">Salinibacter ruber (strain DSM 13855 / M31)</name>
    <dbReference type="NCBI Taxonomy" id="309807"/>
    <lineage>
        <taxon>Bacteria</taxon>
        <taxon>Pseudomonadati</taxon>
        <taxon>Rhodothermota</taxon>
        <taxon>Rhodothermia</taxon>
        <taxon>Rhodothermales</taxon>
        <taxon>Salinibacteraceae</taxon>
        <taxon>Salinibacter</taxon>
    </lineage>
</organism>
<sequence>MHKLTLDDVDVRGQRVLIRVDFNVPLDTSEDGSPCVGDDTRIRAALPTIRHVLDHGGKAILVSHLGRPGGQPDPDLSLACVADHLGTLIEERVRFSSNTVGDTVEEVINGMSEGSVILLENTRFDAGEKANDEAFATALANLADVYVNDAFGAAHRAHASTAGVAEFMDVAALGRLMEDEIEALTRVRDDPAHPMVAILGGSKVSDKLGTIRALSETADHLLIGGAMSYTFLKVLGHEVGASRVEADRLDTAEDLYEQAEGTITLPTDHVVAEAPEADATASVVEGDIPAELMGLDIGPATIDAYRDRILGAATVVWNGPMGVFEVDPFADGTTAIAEAMADATDDGAFSVVGGGDSVSALTRSGCDDRISHVSTGGGALLTFLEGAPLPGVEALTDA</sequence>
<name>PGK_SALRD</name>
<accession>Q2S3A7</accession>
<gene>
    <name evidence="1" type="primary">pgk</name>
    <name type="ordered locus">SRU_1199</name>
</gene>